<organism>
    <name type="scientific">Cuphea lanceolata</name>
    <name type="common">Cigar flower</name>
    <dbReference type="NCBI Taxonomy" id="3930"/>
    <lineage>
        <taxon>Eukaryota</taxon>
        <taxon>Viridiplantae</taxon>
        <taxon>Streptophyta</taxon>
        <taxon>Embryophyta</taxon>
        <taxon>Tracheophyta</taxon>
        <taxon>Spermatophyta</taxon>
        <taxon>Magnoliopsida</taxon>
        <taxon>eudicotyledons</taxon>
        <taxon>Gunneridae</taxon>
        <taxon>Pentapetalae</taxon>
        <taxon>rosids</taxon>
        <taxon>malvids</taxon>
        <taxon>Myrtales</taxon>
        <taxon>Lythraceae</taxon>
        <taxon>Cuphea</taxon>
    </lineage>
</organism>
<gene>
    <name type="primary">ACL1.3</name>
    <name type="synonym">ACP1-3</name>
</gene>
<evidence type="ECO:0000250" key="1"/>
<evidence type="ECO:0000255" key="2"/>
<evidence type="ECO:0000255" key="3">
    <source>
        <dbReference type="PROSITE-ProRule" id="PRU00258"/>
    </source>
</evidence>
<evidence type="ECO:0000305" key="4"/>
<protein>
    <recommendedName>
        <fullName>Acyl carrier protein 3, chloroplastic</fullName>
        <shortName>ACP</shortName>
    </recommendedName>
</protein>
<name>ACP3_CUPLA</name>
<dbReference type="EMBL" id="X77622">
    <property type="protein sequence ID" value="CAA54716.1"/>
    <property type="molecule type" value="mRNA"/>
</dbReference>
<dbReference type="PIR" id="S42027">
    <property type="entry name" value="S42027"/>
</dbReference>
<dbReference type="SMR" id="P52413"/>
<dbReference type="UniPathway" id="UPA00094"/>
<dbReference type="GO" id="GO:0009507">
    <property type="term" value="C:chloroplast"/>
    <property type="evidence" value="ECO:0007669"/>
    <property type="project" value="UniProtKB-SubCell"/>
</dbReference>
<dbReference type="GO" id="GO:0000036">
    <property type="term" value="F:acyl carrier activity"/>
    <property type="evidence" value="ECO:0007669"/>
    <property type="project" value="InterPro"/>
</dbReference>
<dbReference type="Gene3D" id="1.10.1200.10">
    <property type="entry name" value="ACP-like"/>
    <property type="match status" value="1"/>
</dbReference>
<dbReference type="HAMAP" id="MF_01217">
    <property type="entry name" value="Acyl_carrier"/>
    <property type="match status" value="1"/>
</dbReference>
<dbReference type="InterPro" id="IPR003231">
    <property type="entry name" value="ACP"/>
</dbReference>
<dbReference type="InterPro" id="IPR036736">
    <property type="entry name" value="ACP-like_sf"/>
</dbReference>
<dbReference type="InterPro" id="IPR044813">
    <property type="entry name" value="ACP_chloroplastic"/>
</dbReference>
<dbReference type="InterPro" id="IPR009081">
    <property type="entry name" value="PP-bd_ACP"/>
</dbReference>
<dbReference type="InterPro" id="IPR006162">
    <property type="entry name" value="Ppantetheine_attach_site"/>
</dbReference>
<dbReference type="NCBIfam" id="TIGR00517">
    <property type="entry name" value="acyl_carrier"/>
    <property type="match status" value="1"/>
</dbReference>
<dbReference type="PANTHER" id="PTHR46153">
    <property type="entry name" value="ACYL CARRIER PROTEIN"/>
    <property type="match status" value="1"/>
</dbReference>
<dbReference type="PANTHER" id="PTHR46153:SF20">
    <property type="entry name" value="ACYL CARRIER PROTEIN 2, CHLOROPLASTIC-RELATED"/>
    <property type="match status" value="1"/>
</dbReference>
<dbReference type="Pfam" id="PF00550">
    <property type="entry name" value="PP-binding"/>
    <property type="match status" value="1"/>
</dbReference>
<dbReference type="SUPFAM" id="SSF47336">
    <property type="entry name" value="ACP-like"/>
    <property type="match status" value="1"/>
</dbReference>
<dbReference type="PROSITE" id="PS50075">
    <property type="entry name" value="CARRIER"/>
    <property type="match status" value="1"/>
</dbReference>
<dbReference type="PROSITE" id="PS00012">
    <property type="entry name" value="PHOSPHOPANTETHEINE"/>
    <property type="match status" value="1"/>
</dbReference>
<keyword id="KW-0150">Chloroplast</keyword>
<keyword id="KW-0275">Fatty acid biosynthesis</keyword>
<keyword id="KW-0276">Fatty acid metabolism</keyword>
<keyword id="KW-0444">Lipid biosynthesis</keyword>
<keyword id="KW-0443">Lipid metabolism</keyword>
<keyword id="KW-0596">Phosphopantetheine</keyword>
<keyword id="KW-0597">Phosphoprotein</keyword>
<keyword id="KW-0934">Plastid</keyword>
<keyword id="KW-0809">Transit peptide</keyword>
<proteinExistence type="evidence at transcript level"/>
<comment type="function">
    <text>Carrier of the growing fatty acid chain in fatty acid biosynthesis.</text>
</comment>
<comment type="pathway">
    <text>Lipid metabolism; fatty acid biosynthesis.</text>
</comment>
<comment type="subcellular location">
    <subcellularLocation>
        <location>Plastid</location>
        <location>Chloroplast</location>
    </subcellularLocation>
</comment>
<comment type="PTM">
    <text evidence="1">4'-phosphopantetheine is transferred from CoA to a specific serine of apo-ACP by acpS. This modification is essential for activity because fatty acids are bound in thioester linkage to the sulfhydryl of the prosthetic group (By similarity).</text>
</comment>
<comment type="similarity">
    <text evidence="4">Belongs to the acyl carrier protein (ACP) family.</text>
</comment>
<reference key="1">
    <citation type="journal article" date="1994" name="Plant Physiol.">
        <title>Three different cDNAs encoding acyl carrier proteins from Cuphea lanceolata.</title>
        <authorList>
            <person name="Voetz M."/>
            <person name="Klein B."/>
            <person name="Schell J."/>
            <person name="Toepfer R."/>
        </authorList>
    </citation>
    <scope>NUCLEOTIDE SEQUENCE [MRNA]</scope>
</reference>
<feature type="transit peptide" description="Chloroplast" evidence="2">
    <location>
        <begin position="1"/>
        <end position="60"/>
    </location>
</feature>
<feature type="chain" id="PRO_0000000579" description="Acyl carrier protein 3, chloroplastic">
    <location>
        <begin position="61"/>
        <end position="143"/>
    </location>
</feature>
<feature type="domain" description="Carrier" evidence="3">
    <location>
        <begin position="64"/>
        <end position="139"/>
    </location>
</feature>
<feature type="modified residue" description="O-(pantetheine 4'-phosphoryl)serine" evidence="3">
    <location>
        <position position="99"/>
    </location>
</feature>
<sequence>MATAAAGSSLICIKSASCSLNRAQVPSGLSSLRSVSLPISGKIFPSLRSSRGPLSFRVCCQAKQETVTRVCEIVKKQLALPEDSEVNGLSKFSALGADSLDTVEIVMGLEEEFGISVEEESAQSIQTVQDAADLIEKLVGNKK</sequence>
<accession>P52413</accession>